<keyword id="KW-1185">Reference proteome</keyword>
<protein>
    <recommendedName>
        <fullName>Uncharacterized protein C18G6.13</fullName>
    </recommendedName>
</protein>
<reference key="1">
    <citation type="journal article" date="2002" name="Nature">
        <title>The genome sequence of Schizosaccharomyces pombe.</title>
        <authorList>
            <person name="Wood V."/>
            <person name="Gwilliam R."/>
            <person name="Rajandream M.A."/>
            <person name="Lyne M.H."/>
            <person name="Lyne R."/>
            <person name="Stewart A."/>
            <person name="Sgouros J.G."/>
            <person name="Peat N."/>
            <person name="Hayles J."/>
            <person name="Baker S.G."/>
            <person name="Basham D."/>
            <person name="Bowman S."/>
            <person name="Brooks K."/>
            <person name="Brown D."/>
            <person name="Brown S."/>
            <person name="Chillingworth T."/>
            <person name="Churcher C.M."/>
            <person name="Collins M."/>
            <person name="Connor R."/>
            <person name="Cronin A."/>
            <person name="Davis P."/>
            <person name="Feltwell T."/>
            <person name="Fraser A."/>
            <person name="Gentles S."/>
            <person name="Goble A."/>
            <person name="Hamlin N."/>
            <person name="Harris D.E."/>
            <person name="Hidalgo J."/>
            <person name="Hodgson G."/>
            <person name="Holroyd S."/>
            <person name="Hornsby T."/>
            <person name="Howarth S."/>
            <person name="Huckle E.J."/>
            <person name="Hunt S."/>
            <person name="Jagels K."/>
            <person name="James K.D."/>
            <person name="Jones L."/>
            <person name="Jones M."/>
            <person name="Leather S."/>
            <person name="McDonald S."/>
            <person name="McLean J."/>
            <person name="Mooney P."/>
            <person name="Moule S."/>
            <person name="Mungall K.L."/>
            <person name="Murphy L.D."/>
            <person name="Niblett D."/>
            <person name="Odell C."/>
            <person name="Oliver K."/>
            <person name="O'Neil S."/>
            <person name="Pearson D."/>
            <person name="Quail M.A."/>
            <person name="Rabbinowitsch E."/>
            <person name="Rutherford K.M."/>
            <person name="Rutter S."/>
            <person name="Saunders D."/>
            <person name="Seeger K."/>
            <person name="Sharp S."/>
            <person name="Skelton J."/>
            <person name="Simmonds M.N."/>
            <person name="Squares R."/>
            <person name="Squares S."/>
            <person name="Stevens K."/>
            <person name="Taylor K."/>
            <person name="Taylor R.G."/>
            <person name="Tivey A."/>
            <person name="Walsh S.V."/>
            <person name="Warren T."/>
            <person name="Whitehead S."/>
            <person name="Woodward J.R."/>
            <person name="Volckaert G."/>
            <person name="Aert R."/>
            <person name="Robben J."/>
            <person name="Grymonprez B."/>
            <person name="Weltjens I."/>
            <person name="Vanstreels E."/>
            <person name="Rieger M."/>
            <person name="Schaefer M."/>
            <person name="Mueller-Auer S."/>
            <person name="Gabel C."/>
            <person name="Fuchs M."/>
            <person name="Duesterhoeft A."/>
            <person name="Fritzc C."/>
            <person name="Holzer E."/>
            <person name="Moestl D."/>
            <person name="Hilbert H."/>
            <person name="Borzym K."/>
            <person name="Langer I."/>
            <person name="Beck A."/>
            <person name="Lehrach H."/>
            <person name="Reinhardt R."/>
            <person name="Pohl T.M."/>
            <person name="Eger P."/>
            <person name="Zimmermann W."/>
            <person name="Wedler H."/>
            <person name="Wambutt R."/>
            <person name="Purnelle B."/>
            <person name="Goffeau A."/>
            <person name="Cadieu E."/>
            <person name="Dreano S."/>
            <person name="Gloux S."/>
            <person name="Lelaure V."/>
            <person name="Mottier S."/>
            <person name="Galibert F."/>
            <person name="Aves S.J."/>
            <person name="Xiang Z."/>
            <person name="Hunt C."/>
            <person name="Moore K."/>
            <person name="Hurst S.M."/>
            <person name="Lucas M."/>
            <person name="Rochet M."/>
            <person name="Gaillardin C."/>
            <person name="Tallada V.A."/>
            <person name="Garzon A."/>
            <person name="Thode G."/>
            <person name="Daga R.R."/>
            <person name="Cruzado L."/>
            <person name="Jimenez J."/>
            <person name="Sanchez M."/>
            <person name="del Rey F."/>
            <person name="Benito J."/>
            <person name="Dominguez A."/>
            <person name="Revuelta J.L."/>
            <person name="Moreno S."/>
            <person name="Armstrong J."/>
            <person name="Forsburg S.L."/>
            <person name="Cerutti L."/>
            <person name="Lowe T."/>
            <person name="McCombie W.R."/>
            <person name="Paulsen I."/>
            <person name="Potashkin J."/>
            <person name="Shpakovski G.V."/>
            <person name="Ussery D."/>
            <person name="Barrell B.G."/>
            <person name="Nurse P."/>
        </authorList>
    </citation>
    <scope>NUCLEOTIDE SEQUENCE [LARGE SCALE GENOMIC DNA]</scope>
    <source>
        <strain>972 / ATCC 24843</strain>
    </source>
</reference>
<accession>Q10112</accession>
<name>YAQD_SCHPO</name>
<dbReference type="EMBL" id="CU329670">
    <property type="protein sequence ID" value="CAA92391.1"/>
    <property type="molecule type" value="Genomic_DNA"/>
</dbReference>
<dbReference type="PIR" id="T37926">
    <property type="entry name" value="T37926"/>
</dbReference>
<dbReference type="RefSeq" id="NP_593676.1">
    <property type="nucleotide sequence ID" value="NM_001019108.1"/>
</dbReference>
<dbReference type="BioGRID" id="278965">
    <property type="interactions" value="58"/>
</dbReference>
<dbReference type="STRING" id="284812.Q10112"/>
<dbReference type="PaxDb" id="4896-SPAC18G6.13.1"/>
<dbReference type="EnsemblFungi" id="SPAC18G6.13.1">
    <property type="protein sequence ID" value="SPAC18G6.13.1:pep"/>
    <property type="gene ID" value="SPAC18G6.13"/>
</dbReference>
<dbReference type="KEGG" id="spo:2542507"/>
<dbReference type="PomBase" id="SPAC18G6.13"/>
<dbReference type="VEuPathDB" id="FungiDB:SPAC18G6.13"/>
<dbReference type="HOGENOM" id="CLU_2122495_0_0_1"/>
<dbReference type="InParanoid" id="Q10112"/>
<dbReference type="OMA" id="WVETSSL"/>
<dbReference type="PRO" id="PR:Q10112"/>
<dbReference type="Proteomes" id="UP000002485">
    <property type="component" value="Chromosome I"/>
</dbReference>
<dbReference type="GO" id="GO:0005635">
    <property type="term" value="C:nuclear envelope"/>
    <property type="evidence" value="ECO:0007005"/>
    <property type="project" value="PomBase"/>
</dbReference>
<dbReference type="GO" id="GO:0005634">
    <property type="term" value="C:nucleus"/>
    <property type="evidence" value="ECO:0007005"/>
    <property type="project" value="PomBase"/>
</dbReference>
<sequence length="114" mass="13110">MRLKVSCTEFPIQQWVETSSLELVDSVNCVADLCHAIWMFNGGCADWRLQILKEGFTVPMTGIISQYLKTDDHIKIVKEIYPPNLPVLPFRVYTTQNTSVESELVEWEDVEMEA</sequence>
<proteinExistence type="predicted"/>
<feature type="chain" id="PRO_0000116462" description="Uncharacterized protein C18G6.13">
    <location>
        <begin position="1"/>
        <end position="114"/>
    </location>
</feature>
<gene>
    <name type="ORF">SPAC18G6.13</name>
</gene>
<organism>
    <name type="scientific">Schizosaccharomyces pombe (strain 972 / ATCC 24843)</name>
    <name type="common">Fission yeast</name>
    <dbReference type="NCBI Taxonomy" id="284812"/>
    <lineage>
        <taxon>Eukaryota</taxon>
        <taxon>Fungi</taxon>
        <taxon>Dikarya</taxon>
        <taxon>Ascomycota</taxon>
        <taxon>Taphrinomycotina</taxon>
        <taxon>Schizosaccharomycetes</taxon>
        <taxon>Schizosaccharomycetales</taxon>
        <taxon>Schizosaccharomycetaceae</taxon>
        <taxon>Schizosaccharomyces</taxon>
    </lineage>
</organism>